<organism>
    <name type="scientific">Halobacterium salinarum (strain ATCC 29341 / DSM 671 / R1)</name>
    <dbReference type="NCBI Taxonomy" id="478009"/>
    <lineage>
        <taxon>Archaea</taxon>
        <taxon>Methanobacteriati</taxon>
        <taxon>Methanobacteriota</taxon>
        <taxon>Stenosarchaea group</taxon>
        <taxon>Halobacteria</taxon>
        <taxon>Halobacteriales</taxon>
        <taxon>Halobacteriaceae</taxon>
        <taxon>Halobacterium</taxon>
        <taxon>Halobacterium salinarum NRC-34001</taxon>
    </lineage>
</organism>
<dbReference type="EC" id="2.7.1.21" evidence="1"/>
<dbReference type="EMBL" id="AM774415">
    <property type="protein sequence ID" value="CAP14092.1"/>
    <property type="molecule type" value="Genomic_DNA"/>
</dbReference>
<dbReference type="RefSeq" id="WP_010903105.1">
    <property type="nucleotide sequence ID" value="NC_010364.1"/>
</dbReference>
<dbReference type="SMR" id="B0R5S5"/>
<dbReference type="EnsemblBacteria" id="CAP14092">
    <property type="protein sequence ID" value="CAP14092"/>
    <property type="gene ID" value="OE_3159R"/>
</dbReference>
<dbReference type="KEGG" id="hsl:OE_3159R"/>
<dbReference type="HOGENOM" id="CLU_064400_3_0_2"/>
<dbReference type="PhylomeDB" id="B0R5S5"/>
<dbReference type="Proteomes" id="UP000001321">
    <property type="component" value="Chromosome"/>
</dbReference>
<dbReference type="GO" id="GO:0005737">
    <property type="term" value="C:cytoplasm"/>
    <property type="evidence" value="ECO:0007669"/>
    <property type="project" value="UniProtKB-SubCell"/>
</dbReference>
<dbReference type="GO" id="GO:0005524">
    <property type="term" value="F:ATP binding"/>
    <property type="evidence" value="ECO:0007669"/>
    <property type="project" value="UniProtKB-UniRule"/>
</dbReference>
<dbReference type="GO" id="GO:0004797">
    <property type="term" value="F:thymidine kinase activity"/>
    <property type="evidence" value="ECO:0007669"/>
    <property type="project" value="UniProtKB-UniRule"/>
</dbReference>
<dbReference type="GO" id="GO:0008270">
    <property type="term" value="F:zinc ion binding"/>
    <property type="evidence" value="ECO:0007669"/>
    <property type="project" value="UniProtKB-UniRule"/>
</dbReference>
<dbReference type="GO" id="GO:0071897">
    <property type="term" value="P:DNA biosynthetic process"/>
    <property type="evidence" value="ECO:0007669"/>
    <property type="project" value="UniProtKB-KW"/>
</dbReference>
<dbReference type="GO" id="GO:0046104">
    <property type="term" value="P:thymidine metabolic process"/>
    <property type="evidence" value="ECO:0007669"/>
    <property type="project" value="TreeGrafter"/>
</dbReference>
<dbReference type="FunFam" id="3.30.60.20:FF:000026">
    <property type="entry name" value="Thymidine kinase"/>
    <property type="match status" value="1"/>
</dbReference>
<dbReference type="Gene3D" id="3.30.60.20">
    <property type="match status" value="1"/>
</dbReference>
<dbReference type="Gene3D" id="3.40.50.300">
    <property type="entry name" value="P-loop containing nucleotide triphosphate hydrolases"/>
    <property type="match status" value="1"/>
</dbReference>
<dbReference type="HAMAP" id="MF_00124">
    <property type="entry name" value="Thymidine_kinase"/>
    <property type="match status" value="1"/>
</dbReference>
<dbReference type="InterPro" id="IPR027417">
    <property type="entry name" value="P-loop_NTPase"/>
</dbReference>
<dbReference type="InterPro" id="IPR001267">
    <property type="entry name" value="Thymidine_kinase"/>
</dbReference>
<dbReference type="InterPro" id="IPR020633">
    <property type="entry name" value="Thymidine_kinase_CS"/>
</dbReference>
<dbReference type="NCBIfam" id="NF003296">
    <property type="entry name" value="PRK04296.1-1"/>
    <property type="match status" value="1"/>
</dbReference>
<dbReference type="PANTHER" id="PTHR11441">
    <property type="entry name" value="THYMIDINE KINASE"/>
    <property type="match status" value="1"/>
</dbReference>
<dbReference type="PANTHER" id="PTHR11441:SF0">
    <property type="entry name" value="THYMIDINE KINASE, CYTOSOLIC"/>
    <property type="match status" value="1"/>
</dbReference>
<dbReference type="Pfam" id="PF00265">
    <property type="entry name" value="TK"/>
    <property type="match status" value="1"/>
</dbReference>
<dbReference type="PIRSF" id="PIRSF035805">
    <property type="entry name" value="TK_cell"/>
    <property type="match status" value="1"/>
</dbReference>
<dbReference type="SUPFAM" id="SSF57716">
    <property type="entry name" value="Glucocorticoid receptor-like (DNA-binding domain)"/>
    <property type="match status" value="1"/>
</dbReference>
<dbReference type="SUPFAM" id="SSF52540">
    <property type="entry name" value="P-loop containing nucleoside triphosphate hydrolases"/>
    <property type="match status" value="1"/>
</dbReference>
<dbReference type="PROSITE" id="PS00603">
    <property type="entry name" value="TK_CELLULAR_TYPE"/>
    <property type="match status" value="1"/>
</dbReference>
<feature type="chain" id="PRO_1000095433" description="Thymidine kinase">
    <location>
        <begin position="1"/>
        <end position="195"/>
    </location>
</feature>
<feature type="active site" description="Proton acceptor" evidence="1">
    <location>
        <position position="92"/>
    </location>
</feature>
<feature type="binding site" evidence="1">
    <location>
        <begin position="15"/>
        <end position="22"/>
    </location>
    <ligand>
        <name>ATP</name>
        <dbReference type="ChEBI" id="CHEBI:30616"/>
    </ligand>
</feature>
<feature type="binding site" evidence="1">
    <location>
        <begin position="91"/>
        <end position="94"/>
    </location>
    <ligand>
        <name>ATP</name>
        <dbReference type="ChEBI" id="CHEBI:30616"/>
    </ligand>
</feature>
<feature type="binding site" evidence="1">
    <location>
        <position position="148"/>
    </location>
    <ligand>
        <name>Zn(2+)</name>
        <dbReference type="ChEBI" id="CHEBI:29105"/>
    </ligand>
</feature>
<feature type="binding site" evidence="1">
    <location>
        <position position="151"/>
    </location>
    <ligand>
        <name>Zn(2+)</name>
        <dbReference type="ChEBI" id="CHEBI:29105"/>
    </ligand>
</feature>
<feature type="binding site" evidence="1">
    <location>
        <position position="186"/>
    </location>
    <ligand>
        <name>Zn(2+)</name>
        <dbReference type="ChEBI" id="CHEBI:29105"/>
    </ligand>
</feature>
<feature type="binding site" evidence="1">
    <location>
        <position position="189"/>
    </location>
    <ligand>
        <name>Zn(2+)</name>
        <dbReference type="ChEBI" id="CHEBI:29105"/>
    </ligand>
</feature>
<accession>B0R5S5</accession>
<proteinExistence type="inferred from homology"/>
<sequence length="195" mass="21305">MHAITNSGWVEVITGSMFSGKTEELLRRLRRAEIAGQDVAAVTPAVDDRYGEATLGSHAGRSWAATVVEPTAEGVASIPTLLNGEQVVAIDEANFFPAELVDVCQELAADGRRVVLSGTDQTFRGEPFEPVPQLMAIAEYVDKMRAICMQCGEPATRNQRLIEGEPAHYDDPTVMVGAEETYEARCRNCHVVRRE</sequence>
<name>KITH_HALS3</name>
<protein>
    <recommendedName>
        <fullName evidence="1">Thymidine kinase</fullName>
        <ecNumber evidence="1">2.7.1.21</ecNumber>
    </recommendedName>
</protein>
<evidence type="ECO:0000255" key="1">
    <source>
        <dbReference type="HAMAP-Rule" id="MF_00124"/>
    </source>
</evidence>
<gene>
    <name evidence="1" type="primary">tdk</name>
    <name type="ordered locus">OE_3159R</name>
</gene>
<reference key="1">
    <citation type="journal article" date="2008" name="Genomics">
        <title>Evolution in the laboratory: the genome of Halobacterium salinarum strain R1 compared to that of strain NRC-1.</title>
        <authorList>
            <person name="Pfeiffer F."/>
            <person name="Schuster S.C."/>
            <person name="Broicher A."/>
            <person name="Falb M."/>
            <person name="Palm P."/>
            <person name="Rodewald K."/>
            <person name="Ruepp A."/>
            <person name="Soppa J."/>
            <person name="Tittor J."/>
            <person name="Oesterhelt D."/>
        </authorList>
    </citation>
    <scope>NUCLEOTIDE SEQUENCE [LARGE SCALE GENOMIC DNA]</scope>
    <source>
        <strain>ATCC 29341 / DSM 671 / R1</strain>
    </source>
</reference>
<comment type="catalytic activity">
    <reaction evidence="1">
        <text>thymidine + ATP = dTMP + ADP + H(+)</text>
        <dbReference type="Rhea" id="RHEA:19129"/>
        <dbReference type="ChEBI" id="CHEBI:15378"/>
        <dbReference type="ChEBI" id="CHEBI:17748"/>
        <dbReference type="ChEBI" id="CHEBI:30616"/>
        <dbReference type="ChEBI" id="CHEBI:63528"/>
        <dbReference type="ChEBI" id="CHEBI:456216"/>
        <dbReference type="EC" id="2.7.1.21"/>
    </reaction>
</comment>
<comment type="subunit">
    <text evidence="1">Homotetramer.</text>
</comment>
<comment type="subcellular location">
    <subcellularLocation>
        <location evidence="1">Cytoplasm</location>
    </subcellularLocation>
</comment>
<comment type="similarity">
    <text evidence="1">Belongs to the thymidine kinase family.</text>
</comment>
<keyword id="KW-0067">ATP-binding</keyword>
<keyword id="KW-0963">Cytoplasm</keyword>
<keyword id="KW-0237">DNA synthesis</keyword>
<keyword id="KW-0418">Kinase</keyword>
<keyword id="KW-0479">Metal-binding</keyword>
<keyword id="KW-0547">Nucleotide-binding</keyword>
<keyword id="KW-0808">Transferase</keyword>
<keyword id="KW-0862">Zinc</keyword>